<dbReference type="EMBL" id="DQ458989">
    <property type="protein sequence ID" value="ABE98179.1"/>
    <property type="molecule type" value="mRNA"/>
</dbReference>
<dbReference type="SMR" id="Q1KSC7"/>
<dbReference type="GO" id="GO:0022625">
    <property type="term" value="C:cytosolic large ribosomal subunit"/>
    <property type="evidence" value="ECO:0007669"/>
    <property type="project" value="TreeGrafter"/>
</dbReference>
<dbReference type="GO" id="GO:0003735">
    <property type="term" value="F:structural constituent of ribosome"/>
    <property type="evidence" value="ECO:0007669"/>
    <property type="project" value="InterPro"/>
</dbReference>
<dbReference type="GO" id="GO:0002181">
    <property type="term" value="P:cytoplasmic translation"/>
    <property type="evidence" value="ECO:0007669"/>
    <property type="project" value="TreeGrafter"/>
</dbReference>
<dbReference type="CDD" id="cd00463">
    <property type="entry name" value="Ribosomal_L31e"/>
    <property type="match status" value="1"/>
</dbReference>
<dbReference type="FunFam" id="3.10.440.10:FF:000001">
    <property type="entry name" value="60S ribosomal protein L31"/>
    <property type="match status" value="1"/>
</dbReference>
<dbReference type="Gene3D" id="3.10.440.10">
    <property type="match status" value="1"/>
</dbReference>
<dbReference type="InterPro" id="IPR000054">
    <property type="entry name" value="Ribosomal_eL31"/>
</dbReference>
<dbReference type="InterPro" id="IPR020052">
    <property type="entry name" value="Ribosomal_eL31_CS"/>
</dbReference>
<dbReference type="InterPro" id="IPR023621">
    <property type="entry name" value="Ribosomal_eL31_dom_sf"/>
</dbReference>
<dbReference type="PANTHER" id="PTHR10956">
    <property type="entry name" value="60S RIBOSOMAL PROTEIN L31"/>
    <property type="match status" value="1"/>
</dbReference>
<dbReference type="PANTHER" id="PTHR10956:SF0">
    <property type="entry name" value="60S RIBOSOMAL PROTEIN L31"/>
    <property type="match status" value="1"/>
</dbReference>
<dbReference type="Pfam" id="PF01198">
    <property type="entry name" value="Ribosomal_L31e"/>
    <property type="match status" value="1"/>
</dbReference>
<dbReference type="SMART" id="SM01380">
    <property type="entry name" value="Ribosomal_L31e"/>
    <property type="match status" value="1"/>
</dbReference>
<dbReference type="SUPFAM" id="SSF54575">
    <property type="entry name" value="Ribosomal protein L31e"/>
    <property type="match status" value="1"/>
</dbReference>
<dbReference type="PROSITE" id="PS01144">
    <property type="entry name" value="RIBOSOMAL_L31E"/>
    <property type="match status" value="1"/>
</dbReference>
<gene>
    <name type="primary">RPL31</name>
</gene>
<reference key="1">
    <citation type="submission" date="2006-03" db="EMBL/GenBank/DDBJ databases">
        <title>Gene expression analysis of hepatocellular carcinomas in WHV infected woodchuck.</title>
        <authorList>
            <person name="Xu C."/>
            <person name="Yamamoto T."/>
            <person name="William M.S."/>
        </authorList>
    </citation>
    <scope>NUCLEOTIDE SEQUENCE [MRNA]</scope>
</reference>
<feature type="chain" id="PRO_0000265733" description="Large ribosomal subunit protein eL31">
    <location>
        <begin position="1"/>
        <end position="125"/>
    </location>
</feature>
<feature type="modified residue" description="N-acetylmethionine" evidence="1">
    <location>
        <position position="1"/>
    </location>
</feature>
<feature type="modified residue" description="Phosphoserine" evidence="2">
    <location>
        <position position="15"/>
    </location>
</feature>
<feature type="modified residue" description="N6-succinyllysine" evidence="2">
    <location>
        <position position="55"/>
    </location>
</feature>
<feature type="modified residue" description="N6-succinyllysine" evidence="2">
    <location>
        <position position="70"/>
    </location>
</feature>
<feature type="modified residue" description="N6-acetyllysine; alternate" evidence="1">
    <location>
        <position position="75"/>
    </location>
</feature>
<feature type="modified residue" description="N6-succinyllysine; alternate" evidence="2">
    <location>
        <position position="75"/>
    </location>
</feature>
<feature type="modified residue" description="Phosphoserine" evidence="1">
    <location>
        <position position="98"/>
    </location>
</feature>
<sequence>MAPAKKGGEKKKGRSAINEVVTREYTINIHKRIHGVGFKKRAPRALKEIRKFAMKEMGTPDVRIDTRLNKAVWAKGIRNVPYRIRVRLSRKRNEDEDSPNKLYTLVTYVPVTTFKNLQTVNVDEN</sequence>
<organism>
    <name type="scientific">Marmota monax</name>
    <name type="common">Woodchuck</name>
    <dbReference type="NCBI Taxonomy" id="9995"/>
    <lineage>
        <taxon>Eukaryota</taxon>
        <taxon>Metazoa</taxon>
        <taxon>Chordata</taxon>
        <taxon>Craniata</taxon>
        <taxon>Vertebrata</taxon>
        <taxon>Euteleostomi</taxon>
        <taxon>Mammalia</taxon>
        <taxon>Eutheria</taxon>
        <taxon>Euarchontoglires</taxon>
        <taxon>Glires</taxon>
        <taxon>Rodentia</taxon>
        <taxon>Sciuromorpha</taxon>
        <taxon>Sciuridae</taxon>
        <taxon>Xerinae</taxon>
        <taxon>Marmotini</taxon>
        <taxon>Marmota</taxon>
    </lineage>
</organism>
<comment type="function">
    <text evidence="1">Component of the large ribosomal subunit. The ribosome is a large ribonucleoprotein complex responsible for the synthesis of proteins in the cell.</text>
</comment>
<comment type="subunit">
    <text evidence="1">Component of the large ribosomal subunit.</text>
</comment>
<comment type="subcellular location">
    <subcellularLocation>
        <location evidence="1">Cytoplasm</location>
    </subcellularLocation>
</comment>
<comment type="similarity">
    <text evidence="3">Belongs to the eukaryotic ribosomal protein eL31 family.</text>
</comment>
<proteinExistence type="evidence at transcript level"/>
<protein>
    <recommendedName>
        <fullName evidence="3">Large ribosomal subunit protein eL31</fullName>
    </recommendedName>
    <alternativeName>
        <fullName>60S ribosomal protein L31</fullName>
    </alternativeName>
</protein>
<accession>Q1KSC7</accession>
<name>RL31_MARMO</name>
<evidence type="ECO:0000250" key="1">
    <source>
        <dbReference type="UniProtKB" id="P62899"/>
    </source>
</evidence>
<evidence type="ECO:0000250" key="2">
    <source>
        <dbReference type="UniProtKB" id="P62900"/>
    </source>
</evidence>
<evidence type="ECO:0000305" key="3"/>
<keyword id="KW-0007">Acetylation</keyword>
<keyword id="KW-0963">Cytoplasm</keyword>
<keyword id="KW-0597">Phosphoprotein</keyword>
<keyword id="KW-0687">Ribonucleoprotein</keyword>
<keyword id="KW-0689">Ribosomal protein</keyword>